<feature type="chain" id="PRO_0000065993" description="Chain length determinant protein">
    <location>
        <begin position="1"/>
        <end position="327"/>
    </location>
</feature>
<feature type="topological domain" description="Cytoplasmic" evidence="1">
    <location>
        <begin position="1"/>
        <end position="31"/>
    </location>
</feature>
<feature type="transmembrane region" description="Helical" evidence="1">
    <location>
        <begin position="32"/>
        <end position="52"/>
    </location>
</feature>
<feature type="topological domain" description="Periplasmic" evidence="1">
    <location>
        <begin position="53"/>
        <end position="294"/>
    </location>
</feature>
<feature type="transmembrane region" description="Helical" evidence="1">
    <location>
        <begin position="295"/>
        <end position="315"/>
    </location>
</feature>
<feature type="topological domain" description="Cytoplasmic" evidence="1">
    <location>
        <begin position="316"/>
        <end position="327"/>
    </location>
</feature>
<feature type="sequence conflict" description="In Ref. 2." evidence="2" ref="2">
    <original>M</original>
    <variation>I</variation>
    <location>
        <position position="50"/>
    </location>
</feature>
<feature type="sequence conflict" description="In Ref. 2." evidence="2" ref="2">
    <original>Y</original>
    <variation>D</variation>
    <location>
        <position position="136"/>
    </location>
</feature>
<feature type="sequence conflict" description="In Ref. 2." evidence="2" ref="2">
    <original>EV</original>
    <variation>QL</variation>
    <location>
        <begin position="158"/>
        <end position="159"/>
    </location>
</feature>
<feature type="sequence conflict" description="In Ref. 2." evidence="2" ref="2">
    <original>E</original>
    <variation>Q</variation>
    <location>
        <position position="164"/>
    </location>
</feature>
<feature type="strand" evidence="4">
    <location>
        <begin position="56"/>
        <end position="63"/>
    </location>
</feature>
<feature type="helix" evidence="3">
    <location>
        <begin position="68"/>
        <end position="70"/>
    </location>
</feature>
<feature type="helix" evidence="3">
    <location>
        <begin position="71"/>
        <end position="81"/>
    </location>
</feature>
<feature type="helix" evidence="3">
    <location>
        <begin position="88"/>
        <end position="111"/>
    </location>
</feature>
<feature type="strand" evidence="3">
    <location>
        <begin position="112"/>
        <end position="115"/>
    </location>
</feature>
<feature type="strand" evidence="3">
    <location>
        <begin position="118"/>
        <end position="125"/>
    </location>
</feature>
<feature type="strand" evidence="3">
    <location>
        <begin position="132"/>
        <end position="140"/>
    </location>
</feature>
<feature type="helix" evidence="3">
    <location>
        <begin position="141"/>
        <end position="199"/>
    </location>
</feature>
<feature type="helix" evidence="4">
    <location>
        <begin position="201"/>
        <end position="210"/>
    </location>
</feature>
<feature type="turn" evidence="4">
    <location>
        <begin position="225"/>
        <end position="227"/>
    </location>
</feature>
<feature type="helix" evidence="4">
    <location>
        <begin position="228"/>
        <end position="231"/>
    </location>
</feature>
<feature type="helix" evidence="4">
    <location>
        <begin position="233"/>
        <end position="241"/>
    </location>
</feature>
<feature type="helix" evidence="4">
    <location>
        <begin position="243"/>
        <end position="245"/>
    </location>
</feature>
<feature type="helix" evidence="4">
    <location>
        <begin position="252"/>
        <end position="266"/>
    </location>
</feature>
<feature type="turn" evidence="3">
    <location>
        <begin position="271"/>
        <end position="273"/>
    </location>
</feature>
<feature type="strand" evidence="4">
    <location>
        <begin position="278"/>
        <end position="281"/>
    </location>
</feature>
<dbReference type="EMBL" id="Z17278">
    <property type="protein sequence ID" value="CAA78946.1"/>
    <property type="molecule type" value="Genomic_DNA"/>
</dbReference>
<dbReference type="EMBL" id="M89933">
    <property type="status" value="NOT_ANNOTATED_CDS"/>
    <property type="molecule type" value="Genomic_DNA"/>
</dbReference>
<dbReference type="EMBL" id="AE006468">
    <property type="protein sequence ID" value="AAL20983.1"/>
    <property type="molecule type" value="Genomic_DNA"/>
</dbReference>
<dbReference type="RefSeq" id="NP_461024.1">
    <property type="nucleotide sequence ID" value="NC_003197.2"/>
</dbReference>
<dbReference type="RefSeq" id="WP_000215261.1">
    <property type="nucleotide sequence ID" value="NC_003197.2"/>
</dbReference>
<dbReference type="PDB" id="3B8P">
    <property type="method" value="X-ray"/>
    <property type="resolution" value="3.10 A"/>
    <property type="chains" value="A/B/C/D/E=54-294"/>
</dbReference>
<dbReference type="PDB" id="4E29">
    <property type="method" value="X-ray"/>
    <property type="resolution" value="1.60 A"/>
    <property type="chains" value="A/B=201-293"/>
</dbReference>
<dbReference type="PDB" id="4E2C">
    <property type="method" value="X-ray"/>
    <property type="resolution" value="2.80 A"/>
    <property type="chains" value="A/B=256-291"/>
</dbReference>
<dbReference type="PDBsum" id="3B8P"/>
<dbReference type="PDBsum" id="4E29"/>
<dbReference type="PDBsum" id="4E2C"/>
<dbReference type="SMR" id="Q04866"/>
<dbReference type="DIP" id="DIP-46396N"/>
<dbReference type="STRING" id="99287.STM2079"/>
<dbReference type="PaxDb" id="99287-STM2079"/>
<dbReference type="GeneID" id="1253600"/>
<dbReference type="KEGG" id="stm:STM2079"/>
<dbReference type="PATRIC" id="fig|99287.12.peg.2201"/>
<dbReference type="HOGENOM" id="CLU_060925_1_1_6"/>
<dbReference type="OMA" id="IIAKLWR"/>
<dbReference type="PhylomeDB" id="Q04866"/>
<dbReference type="BioCyc" id="SENT99287:STM2079-MONOMER"/>
<dbReference type="UniPathway" id="UPA00030"/>
<dbReference type="EvolutionaryTrace" id="Q04866"/>
<dbReference type="PHI-base" id="PHI:3728"/>
<dbReference type="Proteomes" id="UP000001014">
    <property type="component" value="Chromosome"/>
</dbReference>
<dbReference type="GO" id="GO:0005886">
    <property type="term" value="C:plasma membrane"/>
    <property type="evidence" value="ECO:0000318"/>
    <property type="project" value="GO_Central"/>
</dbReference>
<dbReference type="GO" id="GO:0042802">
    <property type="term" value="F:identical protein binding"/>
    <property type="evidence" value="ECO:0000353"/>
    <property type="project" value="IntAct"/>
</dbReference>
<dbReference type="GO" id="GO:0004713">
    <property type="term" value="F:protein tyrosine kinase activity"/>
    <property type="evidence" value="ECO:0000318"/>
    <property type="project" value="GO_Central"/>
</dbReference>
<dbReference type="GO" id="GO:0009103">
    <property type="term" value="P:lipopolysaccharide biosynthetic process"/>
    <property type="evidence" value="ECO:0007669"/>
    <property type="project" value="UniProtKB-UniPathway"/>
</dbReference>
<dbReference type="DisProt" id="DP02596"/>
<dbReference type="FunFam" id="3.30.1890.10:FF:000002">
    <property type="entry name" value="O-antigen chain length determinant protein"/>
    <property type="match status" value="1"/>
</dbReference>
<dbReference type="Gene3D" id="3.30.1890.10">
    <property type="entry name" value="FepE-like"/>
    <property type="match status" value="1"/>
</dbReference>
<dbReference type="InterPro" id="IPR050445">
    <property type="entry name" value="Bact_polysacc_biosynth/exp"/>
</dbReference>
<dbReference type="InterPro" id="IPR003856">
    <property type="entry name" value="LPS_length_determ_N_term"/>
</dbReference>
<dbReference type="NCBIfam" id="NF012015">
    <property type="entry name" value="PRK15471.1"/>
    <property type="match status" value="1"/>
</dbReference>
<dbReference type="PANTHER" id="PTHR32309:SF29">
    <property type="entry name" value="CHAIN LENGTH DETERMINANT PROTEIN"/>
    <property type="match status" value="1"/>
</dbReference>
<dbReference type="PANTHER" id="PTHR32309">
    <property type="entry name" value="TYROSINE-PROTEIN KINASE"/>
    <property type="match status" value="1"/>
</dbReference>
<dbReference type="Pfam" id="PF02706">
    <property type="entry name" value="Wzz"/>
    <property type="match status" value="1"/>
</dbReference>
<dbReference type="SUPFAM" id="SSF160355">
    <property type="entry name" value="Bacterial polysaccharide co-polymerase-like"/>
    <property type="match status" value="1"/>
</dbReference>
<sequence>MTVDSNTSSGRGNDPEQIDLIELLLQLWRGKMTIIVAVIIAILLAVGYLMIAKEKWTSTAIITQPDAAQVATYTNALNVLYGGNAPKISEVQANFISRFSSAFSALSEVLDNQKEREKLTIEQSVKGQALPLSVSYVSTTAEGAQRRLAEYIQQVDEEVAKELEVDLKDNITLQTKTLQESLETQEVVAQEQKDLRIKQIEEALRYADEAKITQPQIQQTQDVTQDTMFLLGSDALKSMIQNEATRPLVFSPAYYQTKQTLLDIKNLKVTADTVHVYRYVMKPTLPVRRDSPKTAITLVLAVLLGGMIGAGIVLGRNALRSYKPKAL</sequence>
<proteinExistence type="evidence at protein level"/>
<reference key="1">
    <citation type="journal article" date="1993" name="Mol. Microbiol.">
        <title>Repeat unit polysaccharides of bacteria: a model for polymerization resembling that of ribosomes and fatty acid synthetase, with a novel mechanism for determining chain length.</title>
        <authorList>
            <person name="Bastin D.A."/>
            <person name="Stevenson G."/>
            <person name="Brown P.K."/>
            <person name="Haase A."/>
            <person name="Reeves P.R."/>
        </authorList>
    </citation>
    <scope>NUCLEOTIDE SEQUENCE [GENOMIC DNA]</scope>
    <source>
        <strain>LT2</strain>
    </source>
</reference>
<reference key="2">
    <citation type="journal article" date="1992" name="J. Bacteriol.">
        <title>Nucleotide sequences of the genes regulating O-polysaccharide antigen chain length (rol) from Escherichia coli and Salmonella typhimurium: protein homology and functional complementation.</title>
        <authorList>
            <person name="Batchelor R.A."/>
            <person name="Alifano P."/>
            <person name="Biffali E."/>
            <person name="Hull S.I."/>
            <person name="Hull R.A."/>
        </authorList>
    </citation>
    <scope>NUCLEOTIDE SEQUENCE [GENOMIC DNA]</scope>
    <source>
        <strain>LT2</strain>
    </source>
</reference>
<reference key="3">
    <citation type="journal article" date="2001" name="Nature">
        <title>Complete genome sequence of Salmonella enterica serovar Typhimurium LT2.</title>
        <authorList>
            <person name="McClelland M."/>
            <person name="Sanderson K.E."/>
            <person name="Spieth J."/>
            <person name="Clifton S.W."/>
            <person name="Latreille P."/>
            <person name="Courtney L."/>
            <person name="Porwollik S."/>
            <person name="Ali J."/>
            <person name="Dante M."/>
            <person name="Du F."/>
            <person name="Hou S."/>
            <person name="Layman D."/>
            <person name="Leonard S."/>
            <person name="Nguyen C."/>
            <person name="Scott K."/>
            <person name="Holmes A."/>
            <person name="Grewal N."/>
            <person name="Mulvaney E."/>
            <person name="Ryan E."/>
            <person name="Sun H."/>
            <person name="Florea L."/>
            <person name="Miller W."/>
            <person name="Stoneking T."/>
            <person name="Nhan M."/>
            <person name="Waterston R."/>
            <person name="Wilson R.K."/>
        </authorList>
    </citation>
    <scope>NUCLEOTIDE SEQUENCE [LARGE SCALE GENOMIC DNA]</scope>
    <source>
        <strain>LT2 / SGSC1412 / ATCC 700720</strain>
    </source>
</reference>
<keyword id="KW-0002">3D-structure</keyword>
<keyword id="KW-0997">Cell inner membrane</keyword>
<keyword id="KW-1003">Cell membrane</keyword>
<keyword id="KW-0448">Lipopolysaccharide biosynthesis</keyword>
<keyword id="KW-0472">Membrane</keyword>
<keyword id="KW-1185">Reference proteome</keyword>
<keyword id="KW-0812">Transmembrane</keyword>
<keyword id="KW-1133">Transmembrane helix</keyword>
<organism>
    <name type="scientific">Salmonella typhimurium (strain LT2 / SGSC1412 / ATCC 700720)</name>
    <dbReference type="NCBI Taxonomy" id="99287"/>
    <lineage>
        <taxon>Bacteria</taxon>
        <taxon>Pseudomonadati</taxon>
        <taxon>Pseudomonadota</taxon>
        <taxon>Gammaproteobacteria</taxon>
        <taxon>Enterobacterales</taxon>
        <taxon>Enterobacteriaceae</taxon>
        <taxon>Salmonella</taxon>
    </lineage>
</organism>
<gene>
    <name type="primary">wzzB</name>
    <name type="synonym">cld</name>
    <name type="synonym">rol</name>
    <name type="ordered locus">STM2079</name>
</gene>
<name>WZZB_SALTY</name>
<evidence type="ECO:0000255" key="1"/>
<evidence type="ECO:0000305" key="2"/>
<evidence type="ECO:0007829" key="3">
    <source>
        <dbReference type="PDB" id="3B8P"/>
    </source>
</evidence>
<evidence type="ECO:0007829" key="4">
    <source>
        <dbReference type="PDB" id="4E29"/>
    </source>
</evidence>
<accession>Q04866</accession>
<comment type="function">
    <text>Confers a modal distribution of chain length on the O-antigen component of lipopolysaccharide (LPS). Gives rise to a reduced number of short chain molecules and increases in numbers of longer molecules, with a modal value of 20.</text>
</comment>
<comment type="pathway">
    <text>Bacterial outer membrane biogenesis; lipopolysaccharide biosynthesis.</text>
</comment>
<comment type="interaction">
    <interactant intactId="EBI-15680694">
        <id>Q04866</id>
    </interactant>
    <interactant intactId="EBI-15680694">
        <id>Q04866</id>
        <label>wzzB</label>
    </interactant>
    <organismsDiffer>false</organismsDiffer>
    <experiments>4</experiments>
</comment>
<comment type="subcellular location">
    <subcellularLocation>
        <location>Cell inner membrane</location>
        <topology>Multi-pass membrane protein</topology>
    </subcellularLocation>
</comment>
<comment type="similarity">
    <text evidence="2">Belongs to the WzzB/Cld/Rol family.</text>
</comment>
<protein>
    <recommendedName>
        <fullName>Chain length determinant protein</fullName>
    </recommendedName>
    <alternativeName>
        <fullName>Polysaccharide antigen chain regulator</fullName>
    </alternativeName>
</protein>